<accession>A0A1D0BR67</accession>
<keyword id="KW-0165">Cleavage on pair of basic residues</keyword>
<keyword id="KW-1015">Disulfide bond</keyword>
<keyword id="KW-0872">Ion channel impairing toxin</keyword>
<keyword id="KW-0960">Knottin</keyword>
<keyword id="KW-0964">Secreted</keyword>
<keyword id="KW-0732">Signal</keyword>
<keyword id="KW-0800">Toxin</keyword>
<name>T91A_HADIN</name>
<dbReference type="EMBL" id="HACE01000018">
    <property type="protein sequence ID" value="CDZ18802.1"/>
    <property type="molecule type" value="mRNA"/>
</dbReference>
<dbReference type="SMR" id="A0A1D0BR67"/>
<dbReference type="GO" id="GO:0005576">
    <property type="term" value="C:extracellular region"/>
    <property type="evidence" value="ECO:0007669"/>
    <property type="project" value="UniProtKB-SubCell"/>
</dbReference>
<dbReference type="GO" id="GO:0099106">
    <property type="term" value="F:ion channel regulator activity"/>
    <property type="evidence" value="ECO:0007669"/>
    <property type="project" value="UniProtKB-KW"/>
</dbReference>
<dbReference type="GO" id="GO:0090729">
    <property type="term" value="F:toxin activity"/>
    <property type="evidence" value="ECO:0007669"/>
    <property type="project" value="UniProtKB-KW"/>
</dbReference>
<reference key="1">
    <citation type="journal article" date="2020" name="Proc. Natl. Acad. Sci. U.S.A.">
        <title>Structural venomics reveals evolution of a complex venom by duplication and diversification of an ancient peptide-encoding gene.</title>
        <authorList>
            <person name="Pineda S.S."/>
            <person name="Chin Y.K."/>
            <person name="Undheim E.A.B."/>
            <person name="Senff S."/>
            <person name="Mobli M."/>
            <person name="Dauly C."/>
            <person name="Escoubas P."/>
            <person name="Nicholson G.M."/>
            <person name="Kaas Q."/>
            <person name="Guo S."/>
            <person name="Herzig V."/>
            <person name="Mattick J.S."/>
            <person name="King G.F."/>
        </authorList>
    </citation>
    <scope>NUCLEOTIDE SEQUENCE [MRNA]</scope>
    <scope>IDENTIFICATION BY MASS SPECTROMETRY</scope>
    <scope>SUBCELLULAR LOCATION</scope>
    <source>
        <tissue>Venom</tissue>
        <tissue>Venom gland</tissue>
    </source>
</reference>
<reference evidence="6" key="2">
    <citation type="thesis" date="2012" institute="The University of Queensland" country="Australia">
        <title>Probing the chemical diversity of venom from the Australian Funnel-web spider Hadronyche infensa.</title>
        <authorList>
            <person name="Pineda S.S."/>
        </authorList>
    </citation>
    <scope>NUCLEOTIDE SEQUENCE [MRNA]</scope>
    <source>
        <tissue>Venom gland</tissue>
    </source>
</reference>
<reference evidence="6" key="3">
    <citation type="submission" date="2014-07" db="EMBL/GenBank/DDBJ databases">
        <authorList>
            <person name="Zhang J.E."/>
            <person name="Yang H."/>
            <person name="Guo J."/>
            <person name="Deng Z."/>
            <person name="Luo H."/>
            <person name="Luo M."/>
            <person name="Zhao B."/>
        </authorList>
    </citation>
    <scope>NUCLEOTIDE SEQUENCE [MRNA]</scope>
    <source>
        <tissue>Venom gland</tissue>
    </source>
</reference>
<protein>
    <recommendedName>
        <fullName evidence="3">U9-hexatoxin-Hi1</fullName>
        <shortName evidence="3">U9-HXTX-Hi1</shortName>
    </recommendedName>
    <alternativeName>
        <fullName evidence="3">SF14 peptide</fullName>
    </alternativeName>
</protein>
<feature type="signal peptide" evidence="1">
    <location>
        <begin position="1"/>
        <end position="17"/>
    </location>
</feature>
<feature type="propeptide" id="PRO_0000459673" evidence="5">
    <location>
        <begin position="18"/>
        <end position="53"/>
    </location>
</feature>
<feature type="chain" id="PRO_5008896988" description="U9-hexatoxin-Hi1" evidence="5">
    <location>
        <begin position="54"/>
        <end position="119"/>
    </location>
</feature>
<feature type="disulfide bond" evidence="4">
    <location>
        <begin position="55"/>
        <end position="73"/>
    </location>
</feature>
<feature type="disulfide bond" evidence="4">
    <location>
        <begin position="66"/>
        <end position="79"/>
    </location>
</feature>
<feature type="disulfide bond" evidence="4">
    <location>
        <begin position="70"/>
        <end position="117"/>
    </location>
</feature>
<feature type="disulfide bond" evidence="4">
    <location>
        <begin position="72"/>
        <end position="88"/>
    </location>
</feature>
<comment type="function">
    <text evidence="4">Probable ion channel inhibitor.</text>
</comment>
<comment type="subcellular location">
    <subcellularLocation>
        <location evidence="2">Secreted</location>
    </subcellularLocation>
</comment>
<comment type="tissue specificity">
    <text evidence="5">Expressed by the venom gland.</text>
</comment>
<comment type="domain">
    <text evidence="4">The presence of a 'disulfide through disulfide knot' structurally defines this protein as a knottin.</text>
</comment>
<comment type="similarity">
    <text>Belongs to the neurotoxin 03 (Tx2) family. 03 subfamily.</text>
</comment>
<proteinExistence type="evidence at protein level"/>
<evidence type="ECO:0000255" key="1"/>
<evidence type="ECO:0000269" key="2">
    <source>
    </source>
</evidence>
<evidence type="ECO:0000303" key="3">
    <source>
    </source>
</evidence>
<evidence type="ECO:0000305" key="4"/>
<evidence type="ECO:0000305" key="5">
    <source>
    </source>
</evidence>
<evidence type="ECO:0000312" key="6">
    <source>
        <dbReference type="EMBL" id="CDZ18802.1"/>
    </source>
</evidence>
<sequence>MKLYLVILVTSVALAAASPTRTKEEPIEDELLEALLSVEKSLFNEETTVMEKRSCVIGWKQRGQKCERDCECCGVAATCIGERMPGFCGYRTTNNNLGQYILYGYSTVSNGVSAILCAA</sequence>
<organism evidence="6">
    <name type="scientific">Hadronyche infensa</name>
    <name type="common">Fraser island funnel-web spider</name>
    <name type="synonym">Atrax infensus</name>
    <dbReference type="NCBI Taxonomy" id="153481"/>
    <lineage>
        <taxon>Eukaryota</taxon>
        <taxon>Metazoa</taxon>
        <taxon>Ecdysozoa</taxon>
        <taxon>Arthropoda</taxon>
        <taxon>Chelicerata</taxon>
        <taxon>Arachnida</taxon>
        <taxon>Araneae</taxon>
        <taxon>Mygalomorphae</taxon>
        <taxon>Hexathelidae</taxon>
        <taxon>Hadronyche</taxon>
    </lineage>
</organism>